<proteinExistence type="inferred from homology"/>
<keyword id="KW-1185">Reference proteome</keyword>
<keyword id="KW-0687">Ribonucleoprotein</keyword>
<keyword id="KW-0689">Ribosomal protein</keyword>
<protein>
    <recommendedName>
        <fullName evidence="1">Small ribosomal subunit protein bS16</fullName>
    </recommendedName>
    <alternativeName>
        <fullName evidence="2">30S ribosomal protein S16</fullName>
    </alternativeName>
</protein>
<sequence>MVKIRLKRVGKKFNVIYKIVVADSRAPRDGRFIEEVGNYNPHSKSLNLKKEAIISWLNQGVKPSDTVKRLLTREKVWEEFTSLKNNKN</sequence>
<feature type="chain" id="PRO_0000167212" description="Small ribosomal subunit protein bS16">
    <location>
        <begin position="1"/>
        <end position="88"/>
    </location>
</feature>
<evidence type="ECO:0000255" key="1">
    <source>
        <dbReference type="HAMAP-Rule" id="MF_00385"/>
    </source>
</evidence>
<evidence type="ECO:0000305" key="2"/>
<organism>
    <name type="scientific">Mycoplasmopsis pulmonis (strain UAB CTIP)</name>
    <name type="common">Mycoplasma pulmonis</name>
    <dbReference type="NCBI Taxonomy" id="272635"/>
    <lineage>
        <taxon>Bacteria</taxon>
        <taxon>Bacillati</taxon>
        <taxon>Mycoplasmatota</taxon>
        <taxon>Mycoplasmoidales</taxon>
        <taxon>Metamycoplasmataceae</taxon>
        <taxon>Mycoplasmopsis</taxon>
    </lineage>
</organism>
<comment type="similarity">
    <text evidence="1">Belongs to the bacterial ribosomal protein bS16 family.</text>
</comment>
<reference key="1">
    <citation type="journal article" date="2001" name="Nucleic Acids Res.">
        <title>The complete genome sequence of the murine respiratory pathogen Mycoplasma pulmonis.</title>
        <authorList>
            <person name="Chambaud I."/>
            <person name="Heilig R."/>
            <person name="Ferris S."/>
            <person name="Barbe V."/>
            <person name="Samson D."/>
            <person name="Galisson F."/>
            <person name="Moszer I."/>
            <person name="Dybvig K."/>
            <person name="Wroblewski H."/>
            <person name="Viari A."/>
            <person name="Rocha E.P.C."/>
            <person name="Blanchard A."/>
        </authorList>
    </citation>
    <scope>NUCLEOTIDE SEQUENCE [LARGE SCALE GENOMIC DNA]</scope>
    <source>
        <strain>UAB CTIP</strain>
    </source>
</reference>
<name>RS16_MYCPU</name>
<gene>
    <name evidence="1" type="primary">rpsP</name>
    <name type="ordered locus">MYPU_4690</name>
</gene>
<dbReference type="EMBL" id="AL445564">
    <property type="protein sequence ID" value="CAC13642.1"/>
    <property type="molecule type" value="Genomic_DNA"/>
</dbReference>
<dbReference type="PIR" id="E90570">
    <property type="entry name" value="E90570"/>
</dbReference>
<dbReference type="RefSeq" id="WP_010925270.1">
    <property type="nucleotide sequence ID" value="NC_002771.1"/>
</dbReference>
<dbReference type="SMR" id="Q98Q97"/>
<dbReference type="STRING" id="272635.gene:17577070"/>
<dbReference type="KEGG" id="mpu:MYPU_4690"/>
<dbReference type="eggNOG" id="COG0228">
    <property type="taxonomic scope" value="Bacteria"/>
</dbReference>
<dbReference type="HOGENOM" id="CLU_100590_5_2_14"/>
<dbReference type="BioCyc" id="MPUL272635:G1GT6-473-MONOMER"/>
<dbReference type="Proteomes" id="UP000000528">
    <property type="component" value="Chromosome"/>
</dbReference>
<dbReference type="GO" id="GO:0005737">
    <property type="term" value="C:cytoplasm"/>
    <property type="evidence" value="ECO:0007669"/>
    <property type="project" value="UniProtKB-ARBA"/>
</dbReference>
<dbReference type="GO" id="GO:0015935">
    <property type="term" value="C:small ribosomal subunit"/>
    <property type="evidence" value="ECO:0007669"/>
    <property type="project" value="TreeGrafter"/>
</dbReference>
<dbReference type="GO" id="GO:0003735">
    <property type="term" value="F:structural constituent of ribosome"/>
    <property type="evidence" value="ECO:0007669"/>
    <property type="project" value="InterPro"/>
</dbReference>
<dbReference type="GO" id="GO:0006412">
    <property type="term" value="P:translation"/>
    <property type="evidence" value="ECO:0007669"/>
    <property type="project" value="UniProtKB-UniRule"/>
</dbReference>
<dbReference type="Gene3D" id="3.30.1320.10">
    <property type="match status" value="1"/>
</dbReference>
<dbReference type="HAMAP" id="MF_00385">
    <property type="entry name" value="Ribosomal_bS16"/>
    <property type="match status" value="1"/>
</dbReference>
<dbReference type="InterPro" id="IPR000307">
    <property type="entry name" value="Ribosomal_bS16"/>
</dbReference>
<dbReference type="InterPro" id="IPR020592">
    <property type="entry name" value="Ribosomal_bS16_CS"/>
</dbReference>
<dbReference type="InterPro" id="IPR023803">
    <property type="entry name" value="Ribosomal_bS16_dom_sf"/>
</dbReference>
<dbReference type="NCBIfam" id="TIGR00002">
    <property type="entry name" value="S16"/>
    <property type="match status" value="1"/>
</dbReference>
<dbReference type="PANTHER" id="PTHR12919">
    <property type="entry name" value="30S RIBOSOMAL PROTEIN S16"/>
    <property type="match status" value="1"/>
</dbReference>
<dbReference type="PANTHER" id="PTHR12919:SF20">
    <property type="entry name" value="SMALL RIBOSOMAL SUBUNIT PROTEIN BS16M"/>
    <property type="match status" value="1"/>
</dbReference>
<dbReference type="Pfam" id="PF00886">
    <property type="entry name" value="Ribosomal_S16"/>
    <property type="match status" value="1"/>
</dbReference>
<dbReference type="SUPFAM" id="SSF54565">
    <property type="entry name" value="Ribosomal protein S16"/>
    <property type="match status" value="1"/>
</dbReference>
<dbReference type="PROSITE" id="PS00732">
    <property type="entry name" value="RIBOSOMAL_S16"/>
    <property type="match status" value="1"/>
</dbReference>
<accession>Q98Q97</accession>